<evidence type="ECO:0000255" key="1">
    <source>
        <dbReference type="HAMAP-Rule" id="MF_00337"/>
    </source>
</evidence>
<organism>
    <name type="scientific">Vibrio vulnificus (strain CMCP6)</name>
    <dbReference type="NCBI Taxonomy" id="216895"/>
    <lineage>
        <taxon>Bacteria</taxon>
        <taxon>Pseudomonadati</taxon>
        <taxon>Pseudomonadota</taxon>
        <taxon>Gammaproteobacteria</taxon>
        <taxon>Vibrionales</taxon>
        <taxon>Vibrionaceae</taxon>
        <taxon>Vibrio</taxon>
    </lineage>
</organism>
<reference key="1">
    <citation type="submission" date="2002-12" db="EMBL/GenBank/DDBJ databases">
        <title>Complete genome sequence of Vibrio vulnificus CMCP6.</title>
        <authorList>
            <person name="Rhee J.H."/>
            <person name="Kim S.Y."/>
            <person name="Chung S.S."/>
            <person name="Kim J.J."/>
            <person name="Moon Y.H."/>
            <person name="Jeong H."/>
            <person name="Choy H.E."/>
        </authorList>
    </citation>
    <scope>NUCLEOTIDE SEQUENCE [LARGE SCALE GENOMIC DNA]</scope>
    <source>
        <strain>CMCP6</strain>
    </source>
</reference>
<dbReference type="EC" id="3.1.11.6" evidence="1"/>
<dbReference type="EMBL" id="AE016795">
    <property type="protein sequence ID" value="AAO08843.1"/>
    <property type="molecule type" value="Genomic_DNA"/>
</dbReference>
<dbReference type="RefSeq" id="WP_011078418.1">
    <property type="nucleotide sequence ID" value="NC_004459.3"/>
</dbReference>
<dbReference type="SMR" id="Q8DFA5"/>
<dbReference type="GeneID" id="93894655"/>
<dbReference type="KEGG" id="vvu:VV1_0313"/>
<dbReference type="HOGENOM" id="CLU_145918_3_3_6"/>
<dbReference type="Proteomes" id="UP000002275">
    <property type="component" value="Chromosome 1"/>
</dbReference>
<dbReference type="GO" id="GO:0005829">
    <property type="term" value="C:cytosol"/>
    <property type="evidence" value="ECO:0007669"/>
    <property type="project" value="TreeGrafter"/>
</dbReference>
<dbReference type="GO" id="GO:0009318">
    <property type="term" value="C:exodeoxyribonuclease VII complex"/>
    <property type="evidence" value="ECO:0007669"/>
    <property type="project" value="InterPro"/>
</dbReference>
<dbReference type="GO" id="GO:0008855">
    <property type="term" value="F:exodeoxyribonuclease VII activity"/>
    <property type="evidence" value="ECO:0007669"/>
    <property type="project" value="UniProtKB-UniRule"/>
</dbReference>
<dbReference type="GO" id="GO:0006308">
    <property type="term" value="P:DNA catabolic process"/>
    <property type="evidence" value="ECO:0007669"/>
    <property type="project" value="UniProtKB-UniRule"/>
</dbReference>
<dbReference type="Gene3D" id="1.10.287.1040">
    <property type="entry name" value="Exonuclease VII, small subunit"/>
    <property type="match status" value="1"/>
</dbReference>
<dbReference type="HAMAP" id="MF_00337">
    <property type="entry name" value="Exonuc_7_S"/>
    <property type="match status" value="1"/>
</dbReference>
<dbReference type="InterPro" id="IPR003761">
    <property type="entry name" value="Exonuc_VII_S"/>
</dbReference>
<dbReference type="InterPro" id="IPR037004">
    <property type="entry name" value="Exonuc_VII_ssu_sf"/>
</dbReference>
<dbReference type="NCBIfam" id="NF002137">
    <property type="entry name" value="PRK00977.1-1"/>
    <property type="match status" value="1"/>
</dbReference>
<dbReference type="NCBIfam" id="NF002140">
    <property type="entry name" value="PRK00977.1-4"/>
    <property type="match status" value="1"/>
</dbReference>
<dbReference type="NCBIfam" id="TIGR01280">
    <property type="entry name" value="xseB"/>
    <property type="match status" value="1"/>
</dbReference>
<dbReference type="PANTHER" id="PTHR34137">
    <property type="entry name" value="EXODEOXYRIBONUCLEASE 7 SMALL SUBUNIT"/>
    <property type="match status" value="1"/>
</dbReference>
<dbReference type="PANTHER" id="PTHR34137:SF1">
    <property type="entry name" value="EXODEOXYRIBONUCLEASE 7 SMALL SUBUNIT"/>
    <property type="match status" value="1"/>
</dbReference>
<dbReference type="Pfam" id="PF02609">
    <property type="entry name" value="Exonuc_VII_S"/>
    <property type="match status" value="1"/>
</dbReference>
<dbReference type="PIRSF" id="PIRSF006488">
    <property type="entry name" value="Exonuc_VII_S"/>
    <property type="match status" value="1"/>
</dbReference>
<dbReference type="SUPFAM" id="SSF116842">
    <property type="entry name" value="XseB-like"/>
    <property type="match status" value="1"/>
</dbReference>
<accession>Q8DFA5</accession>
<sequence>MATKKPENMSFEATIEELDNLVDQLENGDLALDDALKKFERGIALARASQAKLTEAEQRVSILLSDSDDAPLSDFSTLAE</sequence>
<name>EX7S_VIBVU</name>
<gene>
    <name evidence="1" type="primary">xseB</name>
    <name type="ordered locus">VV1_0313</name>
</gene>
<protein>
    <recommendedName>
        <fullName evidence="1">Exodeoxyribonuclease 7 small subunit</fullName>
        <ecNumber evidence="1">3.1.11.6</ecNumber>
    </recommendedName>
    <alternativeName>
        <fullName evidence="1">Exodeoxyribonuclease VII small subunit</fullName>
        <shortName evidence="1">Exonuclease VII small subunit</shortName>
    </alternativeName>
</protein>
<proteinExistence type="inferred from homology"/>
<comment type="function">
    <text evidence="1">Bidirectionally degrades single-stranded DNA into large acid-insoluble oligonucleotides, which are then degraded further into small acid-soluble oligonucleotides.</text>
</comment>
<comment type="catalytic activity">
    <reaction evidence="1">
        <text>Exonucleolytic cleavage in either 5'- to 3'- or 3'- to 5'-direction to yield nucleoside 5'-phosphates.</text>
        <dbReference type="EC" id="3.1.11.6"/>
    </reaction>
</comment>
<comment type="subunit">
    <text evidence="1">Heterooligomer composed of large and small subunits.</text>
</comment>
<comment type="subcellular location">
    <subcellularLocation>
        <location evidence="1">Cytoplasm</location>
    </subcellularLocation>
</comment>
<comment type="similarity">
    <text evidence="1">Belongs to the XseB family.</text>
</comment>
<keyword id="KW-0963">Cytoplasm</keyword>
<keyword id="KW-0269">Exonuclease</keyword>
<keyword id="KW-0378">Hydrolase</keyword>
<keyword id="KW-0540">Nuclease</keyword>
<feature type="chain" id="PRO_0000207031" description="Exodeoxyribonuclease 7 small subunit">
    <location>
        <begin position="1"/>
        <end position="80"/>
    </location>
</feature>